<proteinExistence type="inferred from homology"/>
<gene>
    <name evidence="1" type="primary">ilvD</name>
    <name type="ordered locus">MT0199</name>
</gene>
<sequence>MPQTTDEAASVSTVADIKPRSRDVTDGLEKAAARGMLRAVGMDDEDFAKPQIGVASSWNEITPCNLSLDRLANAVKEGVFSAGGYPLEFGTISVSDGISMGHEGMHFSLVSREVIADSVEVVMQAERLDGSVLLAGCDKSLPGMLMAAARLDLAAVFLYAGSILPGRAKLSDGSERDVTIIDAFEAVGACSRGLMSRADVDAIERAICPGEGACGGMYTANTMASAAEALGMSLPGSAAPPATDRRRDGFARRSGQAVVELLRRGITARDILTKEAFENAIAVVMAFGGSTNAVLHLLAIAHEANVALSLQDFSRIGSGVPHLADVKPFGRHVMSDVDHIGGVPVVMKALLDAGLLHGDCLTVTGHTMAENLAAITPPDPDGKVLRALANPIHPSGGITILHGSLAPEGAVVKTAGFDSDVFEGTARVFDGERAALDALEDGTITVGDAVVIRYEGPKGGPGMREMLAITGAIKGAGLGKDVLLLTDGRFSGGTTGLCVGHIAPEAVDGGPIALLRNGDRIRLDVAGRVLDVLADPAEFASRQQDFSPPPPRYTTGVLSKYVKLVSSAAVGAVCG</sequence>
<accession>P9WKJ4</accession>
<accession>L0T5Y5</accession>
<accession>O07433</accession>
<accession>P65154</accession>
<name>ILVD_MYCTO</name>
<protein>
    <recommendedName>
        <fullName evidence="1">Dihydroxy-acid dehydratase</fullName>
        <shortName evidence="1">DAD</shortName>
        <ecNumber evidence="1">4.2.1.9</ecNumber>
    </recommendedName>
</protein>
<feature type="chain" id="PRO_0000427643" description="Dihydroxy-acid dehydratase">
    <location>
        <begin position="1"/>
        <end position="575"/>
    </location>
</feature>
<feature type="active site" description="Proton acceptor" evidence="1">
    <location>
        <position position="491"/>
    </location>
</feature>
<feature type="binding site" evidence="1">
    <location>
        <position position="64"/>
    </location>
    <ligand>
        <name>[2Fe-2S] cluster</name>
        <dbReference type="ChEBI" id="CHEBI:190135"/>
    </ligand>
</feature>
<feature type="binding site" evidence="1">
    <location>
        <position position="96"/>
    </location>
    <ligand>
        <name>Mg(2+)</name>
        <dbReference type="ChEBI" id="CHEBI:18420"/>
    </ligand>
</feature>
<feature type="binding site" evidence="1">
    <location>
        <position position="137"/>
    </location>
    <ligand>
        <name>[2Fe-2S] cluster</name>
        <dbReference type="ChEBI" id="CHEBI:190135"/>
    </ligand>
</feature>
<feature type="binding site" evidence="1">
    <location>
        <position position="138"/>
    </location>
    <ligand>
        <name>Mg(2+)</name>
        <dbReference type="ChEBI" id="CHEBI:18420"/>
    </ligand>
</feature>
<feature type="binding site" description="via carbamate group" evidence="1">
    <location>
        <position position="139"/>
    </location>
    <ligand>
        <name>Mg(2+)</name>
        <dbReference type="ChEBI" id="CHEBI:18420"/>
    </ligand>
</feature>
<feature type="binding site" evidence="1">
    <location>
        <position position="214"/>
    </location>
    <ligand>
        <name>[2Fe-2S] cluster</name>
        <dbReference type="ChEBI" id="CHEBI:190135"/>
    </ligand>
</feature>
<feature type="binding site" evidence="1">
    <location>
        <position position="465"/>
    </location>
    <ligand>
        <name>Mg(2+)</name>
        <dbReference type="ChEBI" id="CHEBI:18420"/>
    </ligand>
</feature>
<feature type="modified residue" description="N6-carboxylysine" evidence="1">
    <location>
        <position position="139"/>
    </location>
</feature>
<evidence type="ECO:0000255" key="1">
    <source>
        <dbReference type="HAMAP-Rule" id="MF_00012"/>
    </source>
</evidence>
<dbReference type="EC" id="4.2.1.9" evidence="1"/>
<dbReference type="EMBL" id="AE000516">
    <property type="protein sequence ID" value="AAK44419.1"/>
    <property type="molecule type" value="Genomic_DNA"/>
</dbReference>
<dbReference type="PIR" id="H70906">
    <property type="entry name" value="H70906"/>
</dbReference>
<dbReference type="RefSeq" id="WP_003900824.1">
    <property type="nucleotide sequence ID" value="NZ_KK341227.1"/>
</dbReference>
<dbReference type="SMR" id="P9WKJ4"/>
<dbReference type="KEGG" id="mtc:MT0199"/>
<dbReference type="PATRIC" id="fig|83331.31.peg.216"/>
<dbReference type="HOGENOM" id="CLU_014271_4_2_11"/>
<dbReference type="UniPathway" id="UPA00047">
    <property type="reaction ID" value="UER00057"/>
</dbReference>
<dbReference type="UniPathway" id="UPA00049">
    <property type="reaction ID" value="UER00061"/>
</dbReference>
<dbReference type="Proteomes" id="UP000001020">
    <property type="component" value="Chromosome"/>
</dbReference>
<dbReference type="GO" id="GO:0051537">
    <property type="term" value="F:2 iron, 2 sulfur cluster binding"/>
    <property type="evidence" value="ECO:0007669"/>
    <property type="project" value="UniProtKB-UniRule"/>
</dbReference>
<dbReference type="GO" id="GO:0004160">
    <property type="term" value="F:dihydroxy-acid dehydratase activity"/>
    <property type="evidence" value="ECO:0007669"/>
    <property type="project" value="UniProtKB-UniRule"/>
</dbReference>
<dbReference type="GO" id="GO:0000287">
    <property type="term" value="F:magnesium ion binding"/>
    <property type="evidence" value="ECO:0007669"/>
    <property type="project" value="UniProtKB-UniRule"/>
</dbReference>
<dbReference type="GO" id="GO:0009097">
    <property type="term" value="P:isoleucine biosynthetic process"/>
    <property type="evidence" value="ECO:0007669"/>
    <property type="project" value="UniProtKB-UniRule"/>
</dbReference>
<dbReference type="GO" id="GO:0009099">
    <property type="term" value="P:L-valine biosynthetic process"/>
    <property type="evidence" value="ECO:0007669"/>
    <property type="project" value="UniProtKB-UniRule"/>
</dbReference>
<dbReference type="FunFam" id="3.50.30.80:FF:000001">
    <property type="entry name" value="Dihydroxy-acid dehydratase"/>
    <property type="match status" value="1"/>
</dbReference>
<dbReference type="Gene3D" id="3.50.30.80">
    <property type="entry name" value="IlvD/EDD C-terminal domain-like"/>
    <property type="match status" value="1"/>
</dbReference>
<dbReference type="HAMAP" id="MF_00012">
    <property type="entry name" value="IlvD"/>
    <property type="match status" value="1"/>
</dbReference>
<dbReference type="InterPro" id="IPR050165">
    <property type="entry name" value="DHAD_IlvD/Edd"/>
</dbReference>
<dbReference type="InterPro" id="IPR042096">
    <property type="entry name" value="Dihydro-acid_dehy_C"/>
</dbReference>
<dbReference type="InterPro" id="IPR004404">
    <property type="entry name" value="DihydroxyA_deHydtase"/>
</dbReference>
<dbReference type="InterPro" id="IPR020558">
    <property type="entry name" value="DiOHA_6PGluconate_deHydtase_CS"/>
</dbReference>
<dbReference type="InterPro" id="IPR056740">
    <property type="entry name" value="ILV_EDD_C"/>
</dbReference>
<dbReference type="InterPro" id="IPR000581">
    <property type="entry name" value="ILV_EDD_N"/>
</dbReference>
<dbReference type="InterPro" id="IPR037237">
    <property type="entry name" value="IlvD/EDD_N"/>
</dbReference>
<dbReference type="NCBIfam" id="TIGR00110">
    <property type="entry name" value="ilvD"/>
    <property type="match status" value="1"/>
</dbReference>
<dbReference type="NCBIfam" id="NF002068">
    <property type="entry name" value="PRK00911.1"/>
    <property type="match status" value="1"/>
</dbReference>
<dbReference type="PANTHER" id="PTHR21000">
    <property type="entry name" value="DIHYDROXY-ACID DEHYDRATASE DAD"/>
    <property type="match status" value="1"/>
</dbReference>
<dbReference type="PANTHER" id="PTHR21000:SF5">
    <property type="entry name" value="DIHYDROXY-ACID DEHYDRATASE, MITOCHONDRIAL"/>
    <property type="match status" value="1"/>
</dbReference>
<dbReference type="Pfam" id="PF24877">
    <property type="entry name" value="ILV_EDD_C"/>
    <property type="match status" value="1"/>
</dbReference>
<dbReference type="Pfam" id="PF00920">
    <property type="entry name" value="ILVD_EDD_N"/>
    <property type="match status" value="1"/>
</dbReference>
<dbReference type="SUPFAM" id="SSF143975">
    <property type="entry name" value="IlvD/EDD N-terminal domain-like"/>
    <property type="match status" value="1"/>
</dbReference>
<dbReference type="SUPFAM" id="SSF52016">
    <property type="entry name" value="LeuD/IlvD-like"/>
    <property type="match status" value="1"/>
</dbReference>
<dbReference type="PROSITE" id="PS00886">
    <property type="entry name" value="ILVD_EDD_1"/>
    <property type="match status" value="1"/>
</dbReference>
<dbReference type="PROSITE" id="PS00887">
    <property type="entry name" value="ILVD_EDD_2"/>
    <property type="match status" value="1"/>
</dbReference>
<keyword id="KW-0001">2Fe-2S</keyword>
<keyword id="KW-0028">Amino-acid biosynthesis</keyword>
<keyword id="KW-0100">Branched-chain amino acid biosynthesis</keyword>
<keyword id="KW-0408">Iron</keyword>
<keyword id="KW-0411">Iron-sulfur</keyword>
<keyword id="KW-0456">Lyase</keyword>
<keyword id="KW-0460">Magnesium</keyword>
<keyword id="KW-0479">Metal-binding</keyword>
<keyword id="KW-1185">Reference proteome</keyword>
<reference key="1">
    <citation type="journal article" date="2002" name="J. Bacteriol.">
        <title>Whole-genome comparison of Mycobacterium tuberculosis clinical and laboratory strains.</title>
        <authorList>
            <person name="Fleischmann R.D."/>
            <person name="Alland D."/>
            <person name="Eisen J.A."/>
            <person name="Carpenter L."/>
            <person name="White O."/>
            <person name="Peterson J.D."/>
            <person name="DeBoy R.T."/>
            <person name="Dodson R.J."/>
            <person name="Gwinn M.L."/>
            <person name="Haft D.H."/>
            <person name="Hickey E.K."/>
            <person name="Kolonay J.F."/>
            <person name="Nelson W.C."/>
            <person name="Umayam L.A."/>
            <person name="Ermolaeva M.D."/>
            <person name="Salzberg S.L."/>
            <person name="Delcher A."/>
            <person name="Utterback T.R."/>
            <person name="Weidman J.F."/>
            <person name="Khouri H.M."/>
            <person name="Gill J."/>
            <person name="Mikula A."/>
            <person name="Bishai W."/>
            <person name="Jacobs W.R. Jr."/>
            <person name="Venter J.C."/>
            <person name="Fraser C.M."/>
        </authorList>
    </citation>
    <scope>NUCLEOTIDE SEQUENCE [LARGE SCALE GENOMIC DNA]</scope>
    <source>
        <strain>CDC 1551 / Oshkosh</strain>
    </source>
</reference>
<organism>
    <name type="scientific">Mycobacterium tuberculosis (strain CDC 1551 / Oshkosh)</name>
    <dbReference type="NCBI Taxonomy" id="83331"/>
    <lineage>
        <taxon>Bacteria</taxon>
        <taxon>Bacillati</taxon>
        <taxon>Actinomycetota</taxon>
        <taxon>Actinomycetes</taxon>
        <taxon>Mycobacteriales</taxon>
        <taxon>Mycobacteriaceae</taxon>
        <taxon>Mycobacterium</taxon>
        <taxon>Mycobacterium tuberculosis complex</taxon>
    </lineage>
</organism>
<comment type="function">
    <text evidence="1">Functions in the biosynthesis of branched-chain amino acids. Catalyzes the dehydration of (2R,3R)-2,3-dihydroxy-3-methylpentanoate (2,3-dihydroxy-3-methylvalerate) into 2-oxo-3-methylpentanoate (2-oxo-3-methylvalerate) and of (2R)-2,3-dihydroxy-3-methylbutanoate (2,3-dihydroxyisovalerate) into 2-oxo-3-methylbutanoate (2-oxoisovalerate), the penultimate precursor to L-isoleucine and L-valine, respectively.</text>
</comment>
<comment type="catalytic activity">
    <reaction evidence="1">
        <text>(2R)-2,3-dihydroxy-3-methylbutanoate = 3-methyl-2-oxobutanoate + H2O</text>
        <dbReference type="Rhea" id="RHEA:24809"/>
        <dbReference type="ChEBI" id="CHEBI:11851"/>
        <dbReference type="ChEBI" id="CHEBI:15377"/>
        <dbReference type="ChEBI" id="CHEBI:49072"/>
        <dbReference type="EC" id="4.2.1.9"/>
    </reaction>
    <physiologicalReaction direction="left-to-right" evidence="1">
        <dbReference type="Rhea" id="RHEA:24810"/>
    </physiologicalReaction>
</comment>
<comment type="catalytic activity">
    <reaction evidence="1">
        <text>(2R,3R)-2,3-dihydroxy-3-methylpentanoate = (S)-3-methyl-2-oxopentanoate + H2O</text>
        <dbReference type="Rhea" id="RHEA:27694"/>
        <dbReference type="ChEBI" id="CHEBI:15377"/>
        <dbReference type="ChEBI" id="CHEBI:35146"/>
        <dbReference type="ChEBI" id="CHEBI:49258"/>
        <dbReference type="EC" id="4.2.1.9"/>
    </reaction>
    <physiologicalReaction direction="left-to-right" evidence="1">
        <dbReference type="Rhea" id="RHEA:27695"/>
    </physiologicalReaction>
</comment>
<comment type="cofactor">
    <cofactor evidence="1">
        <name>[2Fe-2S] cluster</name>
        <dbReference type="ChEBI" id="CHEBI:190135"/>
    </cofactor>
    <text evidence="1">Binds 1 [2Fe-2S] cluster per subunit. This cluster acts as a Lewis acid cofactor.</text>
</comment>
<comment type="cofactor">
    <cofactor evidence="1">
        <name>Mg(2+)</name>
        <dbReference type="ChEBI" id="CHEBI:18420"/>
    </cofactor>
</comment>
<comment type="pathway">
    <text evidence="1">Amino-acid biosynthesis; L-isoleucine biosynthesis; L-isoleucine from 2-oxobutanoate: step 3/4.</text>
</comment>
<comment type="pathway">
    <text evidence="1">Amino-acid biosynthesis; L-valine biosynthesis; L-valine from pyruvate: step 3/4.</text>
</comment>
<comment type="subunit">
    <text evidence="1">Homodimer.</text>
</comment>
<comment type="similarity">
    <text evidence="1">Belongs to the IlvD/Edd family.</text>
</comment>